<accession>A9MRB6</accession>
<comment type="function">
    <text evidence="1">Increases the formation of ribosomal termination complexes and stimulates activities of RF-1 and RF-2. It binds guanine nucleotides and has strong preference for UGA stop codons. It may interact directly with the ribosome. The stimulation of RF-1 and RF-2 is significantly reduced by GTP and GDP, but not by GMP.</text>
</comment>
<comment type="subcellular location">
    <subcellularLocation>
        <location evidence="1">Cytoplasm</location>
    </subcellularLocation>
</comment>
<comment type="similarity">
    <text evidence="1">Belongs to the TRAFAC class translation factor GTPase superfamily. Classic translation factor GTPase family. PrfC subfamily.</text>
</comment>
<feature type="chain" id="PRO_1000075165" description="Peptide chain release factor 3">
    <location>
        <begin position="1"/>
        <end position="529"/>
    </location>
</feature>
<feature type="domain" description="tr-type G">
    <location>
        <begin position="11"/>
        <end position="280"/>
    </location>
</feature>
<feature type="binding site" evidence="1">
    <location>
        <begin position="20"/>
        <end position="27"/>
    </location>
    <ligand>
        <name>GTP</name>
        <dbReference type="ChEBI" id="CHEBI:37565"/>
    </ligand>
</feature>
<feature type="binding site" evidence="1">
    <location>
        <begin position="88"/>
        <end position="92"/>
    </location>
    <ligand>
        <name>GTP</name>
        <dbReference type="ChEBI" id="CHEBI:37565"/>
    </ligand>
</feature>
<feature type="binding site" evidence="1">
    <location>
        <begin position="142"/>
        <end position="145"/>
    </location>
    <ligand>
        <name>GTP</name>
        <dbReference type="ChEBI" id="CHEBI:37565"/>
    </ligand>
</feature>
<evidence type="ECO:0000255" key="1">
    <source>
        <dbReference type="HAMAP-Rule" id="MF_00072"/>
    </source>
</evidence>
<keyword id="KW-0963">Cytoplasm</keyword>
<keyword id="KW-0342">GTP-binding</keyword>
<keyword id="KW-0547">Nucleotide-binding</keyword>
<keyword id="KW-0648">Protein biosynthesis</keyword>
<keyword id="KW-1185">Reference proteome</keyword>
<sequence length="529" mass="59622">MTLSPYLQEVAKRRTFAIISHPDAGKTTITEKVLLFGQAIQTAGTVKGRGSSQHAKSDWMEMEKQRGISITTSVMQFPYHDCLVNLLDTPGHEDFSEDTYRTLTAVDCCLMVIDAAKGVEDRTRKLMEVTRLRDTPILTFMNKLDRDIRDPMELLDEVENELKIGCAPITWPIGCGKLFKGVYHLYKDETYLYQTGKGHTIQEVRIVKGLNNPDLDAAVGEDLAQQLRDELELVQGASNEFDKDLFLAGEITPVFFGTALGNFGVDHMLDGLVEWAPAPMPRQTDTRTVEASEEKFSGFVFKIQANMDPKHRDRVAFMRVVSGKYEKGMKLRQVRTGKDVVISDALTFMAGDRSHVEEAYPGDILGLHNHGTIQIGDTFTQGEMMKFTGIPNFAPELFRRIRLKDPLKQKQLLKGLVQLSEEGAVQVFRPISNNDLIVGAVGVLQFDVVVARLKSEYNVEAIYESVNVATARWVESTDAKKFEEFKRKNETQLALDGGDNLTYIAPTMVNLNLTQERYPDVQFRKTREH</sequence>
<protein>
    <recommendedName>
        <fullName evidence="1">Peptide chain release factor 3</fullName>
        <shortName evidence="1">RF-3</shortName>
    </recommendedName>
</protein>
<name>RF3_SALAR</name>
<proteinExistence type="inferred from homology"/>
<gene>
    <name evidence="1" type="primary">prfC</name>
    <name type="ordered locus">SARI_03020</name>
</gene>
<dbReference type="EMBL" id="CP000880">
    <property type="protein sequence ID" value="ABX22864.1"/>
    <property type="molecule type" value="Genomic_DNA"/>
</dbReference>
<dbReference type="SMR" id="A9MRB6"/>
<dbReference type="STRING" id="41514.SARI_03020"/>
<dbReference type="KEGG" id="ses:SARI_03020"/>
<dbReference type="HOGENOM" id="CLU_002794_2_1_6"/>
<dbReference type="Proteomes" id="UP000002084">
    <property type="component" value="Chromosome"/>
</dbReference>
<dbReference type="GO" id="GO:0005829">
    <property type="term" value="C:cytosol"/>
    <property type="evidence" value="ECO:0007669"/>
    <property type="project" value="TreeGrafter"/>
</dbReference>
<dbReference type="GO" id="GO:0005525">
    <property type="term" value="F:GTP binding"/>
    <property type="evidence" value="ECO:0007669"/>
    <property type="project" value="UniProtKB-UniRule"/>
</dbReference>
<dbReference type="GO" id="GO:0003924">
    <property type="term" value="F:GTPase activity"/>
    <property type="evidence" value="ECO:0007669"/>
    <property type="project" value="InterPro"/>
</dbReference>
<dbReference type="GO" id="GO:0097216">
    <property type="term" value="F:guanosine tetraphosphate binding"/>
    <property type="evidence" value="ECO:0007669"/>
    <property type="project" value="UniProtKB-ARBA"/>
</dbReference>
<dbReference type="GO" id="GO:0016150">
    <property type="term" value="F:translation release factor activity, codon nonspecific"/>
    <property type="evidence" value="ECO:0007669"/>
    <property type="project" value="TreeGrafter"/>
</dbReference>
<dbReference type="GO" id="GO:0016149">
    <property type="term" value="F:translation release factor activity, codon specific"/>
    <property type="evidence" value="ECO:0007669"/>
    <property type="project" value="UniProtKB-UniRule"/>
</dbReference>
<dbReference type="GO" id="GO:0006449">
    <property type="term" value="P:regulation of translational termination"/>
    <property type="evidence" value="ECO:0007669"/>
    <property type="project" value="UniProtKB-UniRule"/>
</dbReference>
<dbReference type="CDD" id="cd04169">
    <property type="entry name" value="RF3"/>
    <property type="match status" value="1"/>
</dbReference>
<dbReference type="CDD" id="cd03689">
    <property type="entry name" value="RF3_II"/>
    <property type="match status" value="1"/>
</dbReference>
<dbReference type="CDD" id="cd16259">
    <property type="entry name" value="RF3_III"/>
    <property type="match status" value="1"/>
</dbReference>
<dbReference type="FunFam" id="2.40.30.10:FF:000040">
    <property type="entry name" value="Peptide chain release factor 3"/>
    <property type="match status" value="1"/>
</dbReference>
<dbReference type="FunFam" id="3.30.70.3280:FF:000001">
    <property type="entry name" value="Peptide chain release factor 3"/>
    <property type="match status" value="1"/>
</dbReference>
<dbReference type="FunFam" id="3.40.50.300:FF:000184">
    <property type="entry name" value="Peptide chain release factor 3"/>
    <property type="match status" value="1"/>
</dbReference>
<dbReference type="FunFam" id="3.40.50.300:FF:000253">
    <property type="entry name" value="Peptide chain release factor 3"/>
    <property type="match status" value="1"/>
</dbReference>
<dbReference type="Gene3D" id="3.40.50.300">
    <property type="entry name" value="P-loop containing nucleotide triphosphate hydrolases"/>
    <property type="match status" value="3"/>
</dbReference>
<dbReference type="Gene3D" id="3.30.70.3280">
    <property type="entry name" value="Peptide chain release factor 3, domain III"/>
    <property type="match status" value="1"/>
</dbReference>
<dbReference type="HAMAP" id="MF_00072">
    <property type="entry name" value="Rel_fac_3"/>
    <property type="match status" value="1"/>
</dbReference>
<dbReference type="InterPro" id="IPR053905">
    <property type="entry name" value="EF-G-like_DII"/>
</dbReference>
<dbReference type="InterPro" id="IPR035647">
    <property type="entry name" value="EFG_III/V"/>
</dbReference>
<dbReference type="InterPro" id="IPR031157">
    <property type="entry name" value="G_TR_CS"/>
</dbReference>
<dbReference type="InterPro" id="IPR027417">
    <property type="entry name" value="P-loop_NTPase"/>
</dbReference>
<dbReference type="InterPro" id="IPR004548">
    <property type="entry name" value="PrfC"/>
</dbReference>
<dbReference type="InterPro" id="IPR032090">
    <property type="entry name" value="RF3_C"/>
</dbReference>
<dbReference type="InterPro" id="IPR038467">
    <property type="entry name" value="RF3_dom_3_sf"/>
</dbReference>
<dbReference type="InterPro" id="IPR041732">
    <property type="entry name" value="RF3_GTP-bd"/>
</dbReference>
<dbReference type="InterPro" id="IPR005225">
    <property type="entry name" value="Small_GTP-bd"/>
</dbReference>
<dbReference type="InterPro" id="IPR000795">
    <property type="entry name" value="T_Tr_GTP-bd_dom"/>
</dbReference>
<dbReference type="InterPro" id="IPR009000">
    <property type="entry name" value="Transl_B-barrel_sf"/>
</dbReference>
<dbReference type="NCBIfam" id="TIGR00503">
    <property type="entry name" value="prfC"/>
    <property type="match status" value="1"/>
</dbReference>
<dbReference type="NCBIfam" id="NF001964">
    <property type="entry name" value="PRK00741.1"/>
    <property type="match status" value="1"/>
</dbReference>
<dbReference type="NCBIfam" id="TIGR00231">
    <property type="entry name" value="small_GTP"/>
    <property type="match status" value="1"/>
</dbReference>
<dbReference type="PANTHER" id="PTHR43556">
    <property type="entry name" value="PEPTIDE CHAIN RELEASE FACTOR RF3"/>
    <property type="match status" value="1"/>
</dbReference>
<dbReference type="PANTHER" id="PTHR43556:SF2">
    <property type="entry name" value="PEPTIDE CHAIN RELEASE FACTOR RF3"/>
    <property type="match status" value="1"/>
</dbReference>
<dbReference type="Pfam" id="PF22042">
    <property type="entry name" value="EF-G_D2"/>
    <property type="match status" value="1"/>
</dbReference>
<dbReference type="Pfam" id="PF00009">
    <property type="entry name" value="GTP_EFTU"/>
    <property type="match status" value="1"/>
</dbReference>
<dbReference type="Pfam" id="PF16658">
    <property type="entry name" value="RF3_C"/>
    <property type="match status" value="1"/>
</dbReference>
<dbReference type="PRINTS" id="PR00315">
    <property type="entry name" value="ELONGATNFCT"/>
</dbReference>
<dbReference type="SUPFAM" id="SSF54980">
    <property type="entry name" value="EF-G C-terminal domain-like"/>
    <property type="match status" value="1"/>
</dbReference>
<dbReference type="SUPFAM" id="SSF52540">
    <property type="entry name" value="P-loop containing nucleoside triphosphate hydrolases"/>
    <property type="match status" value="1"/>
</dbReference>
<dbReference type="SUPFAM" id="SSF50447">
    <property type="entry name" value="Translation proteins"/>
    <property type="match status" value="1"/>
</dbReference>
<dbReference type="PROSITE" id="PS00301">
    <property type="entry name" value="G_TR_1"/>
    <property type="match status" value="1"/>
</dbReference>
<dbReference type="PROSITE" id="PS51722">
    <property type="entry name" value="G_TR_2"/>
    <property type="match status" value="1"/>
</dbReference>
<organism>
    <name type="scientific">Salmonella arizonae (strain ATCC BAA-731 / CDC346-86 / RSK2980)</name>
    <dbReference type="NCBI Taxonomy" id="41514"/>
    <lineage>
        <taxon>Bacteria</taxon>
        <taxon>Pseudomonadati</taxon>
        <taxon>Pseudomonadota</taxon>
        <taxon>Gammaproteobacteria</taxon>
        <taxon>Enterobacterales</taxon>
        <taxon>Enterobacteriaceae</taxon>
        <taxon>Salmonella</taxon>
    </lineage>
</organism>
<reference key="1">
    <citation type="submission" date="2007-11" db="EMBL/GenBank/DDBJ databases">
        <authorList>
            <consortium name="The Salmonella enterica serovar Arizonae Genome Sequencing Project"/>
            <person name="McClelland M."/>
            <person name="Sanderson E.K."/>
            <person name="Porwollik S."/>
            <person name="Spieth J."/>
            <person name="Clifton W.S."/>
            <person name="Fulton R."/>
            <person name="Chunyan W."/>
            <person name="Wollam A."/>
            <person name="Shah N."/>
            <person name="Pepin K."/>
            <person name="Bhonagiri V."/>
            <person name="Nash W."/>
            <person name="Johnson M."/>
            <person name="Thiruvilangam P."/>
            <person name="Wilson R."/>
        </authorList>
    </citation>
    <scope>NUCLEOTIDE SEQUENCE [LARGE SCALE GENOMIC DNA]</scope>
    <source>
        <strain>ATCC BAA-731 / CDC346-86 / RSK2980</strain>
    </source>
</reference>